<feature type="signal peptide" evidence="2">
    <location>
        <begin position="1"/>
        <end position="16"/>
    </location>
</feature>
<feature type="chain" id="PRO_0000394710" description="Glucan endo-1,6-beta-glucosidase B">
    <location>
        <begin position="17"/>
        <end position="409"/>
    </location>
</feature>
<feature type="active site" description="Proton donor" evidence="1">
    <location>
        <position position="228"/>
    </location>
</feature>
<feature type="active site" description="Nucleophile" evidence="1">
    <location>
        <position position="330"/>
    </location>
</feature>
<feature type="glycosylation site" description="N-linked (GlcNAc...) asparagine" evidence="2">
    <location>
        <position position="35"/>
    </location>
</feature>
<sequence>MKFILPLFTSLPVALAWLPGIDKDIYSAAGTNIFNVTSASSKRWLPASKKIRGVNLGSHFVIEPWMASMAWSNMGCSGQRSEFDCVMALGQETADQAFADHWGSWITQDDINQMVQYGLNTIRIPVGYWLKEDLVYADSEHFPKGGIGYLEDVCGWASDAGMYIIIDLHGAPGAQQPKQPFTGQYAPNPGFYQDYQYDRALEFLEWMTTSIHQNNKFRNVGMLEIVNEPVQNADQASSMINSYYPSAFTRIRNTESSLGITSNNYLHIQMMNEKWGSGDPTQSLTDNYFAAYDDHRYVKWDSSVAVDKESYISASCVDDRGGNWPTIVGEWSLSVPDNVEHTADWEPSSNTDFYARWFAAQAIAYEKQEGWVFWSWKAQLGDYRWSYKDAVDAGVIPKDLDSIYDYSPC</sequence>
<comment type="function">
    <text evidence="3">Beta-glucanases participate in the metabolism of beta-glucan, the main structural component of the cell wall. Acts on lutean, pustulan and 1,6-oligo-beta-D-glucosides.</text>
</comment>
<comment type="catalytic activity">
    <reaction>
        <text>Random hydrolysis of (1-&gt;6)-linkages in (1-&gt;6)-beta-D-glucans.</text>
        <dbReference type="EC" id="3.2.1.75"/>
    </reaction>
</comment>
<comment type="subcellular location">
    <subcellularLocation>
        <location evidence="1">Secreted</location>
    </subcellularLocation>
</comment>
<comment type="similarity">
    <text evidence="4">Belongs to the glycosyl hydrolase 5 (cellulase A) family.</text>
</comment>
<name>EXGB_EMENI</name>
<organism>
    <name type="scientific">Emericella nidulans (strain FGSC A4 / ATCC 38163 / CBS 112.46 / NRRL 194 / M139)</name>
    <name type="common">Aspergillus nidulans</name>
    <dbReference type="NCBI Taxonomy" id="227321"/>
    <lineage>
        <taxon>Eukaryota</taxon>
        <taxon>Fungi</taxon>
        <taxon>Dikarya</taxon>
        <taxon>Ascomycota</taxon>
        <taxon>Pezizomycotina</taxon>
        <taxon>Eurotiomycetes</taxon>
        <taxon>Eurotiomycetidae</taxon>
        <taxon>Eurotiales</taxon>
        <taxon>Aspergillaceae</taxon>
        <taxon>Aspergillus</taxon>
        <taxon>Aspergillus subgen. Nidulantes</taxon>
    </lineage>
</organism>
<proteinExistence type="evidence at transcript level"/>
<gene>
    <name type="primary">exgB</name>
    <name type="ORF">AN3777</name>
</gene>
<reference key="1">
    <citation type="journal article" date="2006" name="Proc. Natl. Acad. Sci. U.S.A.">
        <title>Development and application of a suite of polysaccharide-degrading enzymes for analyzing plant cell walls.</title>
        <authorList>
            <person name="Bauer S."/>
            <person name="Vasu P."/>
            <person name="Persson S."/>
            <person name="Mort A.J."/>
            <person name="Somerville C.R."/>
        </authorList>
    </citation>
    <scope>NUCLEOTIDE SEQUENCE [MRNA]</scope>
    <scope>FUNCTION</scope>
    <source>
        <strain>FGSC A4 / ATCC 38163 / CBS 112.46 / NRRL 194 / M139</strain>
    </source>
</reference>
<reference key="2">
    <citation type="journal article" date="2005" name="Nature">
        <title>Sequencing of Aspergillus nidulans and comparative analysis with A. fumigatus and A. oryzae.</title>
        <authorList>
            <person name="Galagan J.E."/>
            <person name="Calvo S.E."/>
            <person name="Cuomo C."/>
            <person name="Ma L.-J."/>
            <person name="Wortman J.R."/>
            <person name="Batzoglou S."/>
            <person name="Lee S.-I."/>
            <person name="Bastuerkmen M."/>
            <person name="Spevak C.C."/>
            <person name="Clutterbuck J."/>
            <person name="Kapitonov V."/>
            <person name="Jurka J."/>
            <person name="Scazzocchio C."/>
            <person name="Farman M.L."/>
            <person name="Butler J."/>
            <person name="Purcell S."/>
            <person name="Harris S."/>
            <person name="Braus G.H."/>
            <person name="Draht O."/>
            <person name="Busch S."/>
            <person name="D'Enfert C."/>
            <person name="Bouchier C."/>
            <person name="Goldman G.H."/>
            <person name="Bell-Pedersen D."/>
            <person name="Griffiths-Jones S."/>
            <person name="Doonan J.H."/>
            <person name="Yu J."/>
            <person name="Vienken K."/>
            <person name="Pain A."/>
            <person name="Freitag M."/>
            <person name="Selker E.U."/>
            <person name="Archer D.B."/>
            <person name="Penalva M.A."/>
            <person name="Oakley B.R."/>
            <person name="Momany M."/>
            <person name="Tanaka T."/>
            <person name="Kumagai T."/>
            <person name="Asai K."/>
            <person name="Machida M."/>
            <person name="Nierman W.C."/>
            <person name="Denning D.W."/>
            <person name="Caddick M.X."/>
            <person name="Hynes M."/>
            <person name="Paoletti M."/>
            <person name="Fischer R."/>
            <person name="Miller B.L."/>
            <person name="Dyer P.S."/>
            <person name="Sachs M.S."/>
            <person name="Osmani S.A."/>
            <person name="Birren B.W."/>
        </authorList>
    </citation>
    <scope>NUCLEOTIDE SEQUENCE [LARGE SCALE GENOMIC DNA]</scope>
    <source>
        <strain>FGSC A4 / ATCC 38163 / CBS 112.46 / NRRL 194 / M139</strain>
    </source>
</reference>
<reference key="3">
    <citation type="journal article" date="2009" name="Fungal Genet. Biol.">
        <title>The 2008 update of the Aspergillus nidulans genome annotation: a community effort.</title>
        <authorList>
            <person name="Wortman J.R."/>
            <person name="Gilsenan J.M."/>
            <person name="Joardar V."/>
            <person name="Deegan J."/>
            <person name="Clutterbuck J."/>
            <person name="Andersen M.R."/>
            <person name="Archer D."/>
            <person name="Bencina M."/>
            <person name="Braus G."/>
            <person name="Coutinho P."/>
            <person name="von Dohren H."/>
            <person name="Doonan J."/>
            <person name="Driessen A.J."/>
            <person name="Durek P."/>
            <person name="Espeso E."/>
            <person name="Fekete E."/>
            <person name="Flipphi M."/>
            <person name="Estrada C.G."/>
            <person name="Geysens S."/>
            <person name="Goldman G."/>
            <person name="de Groot P.W."/>
            <person name="Hansen K."/>
            <person name="Harris S.D."/>
            <person name="Heinekamp T."/>
            <person name="Helmstaedt K."/>
            <person name="Henrissat B."/>
            <person name="Hofmann G."/>
            <person name="Homan T."/>
            <person name="Horio T."/>
            <person name="Horiuchi H."/>
            <person name="James S."/>
            <person name="Jones M."/>
            <person name="Karaffa L."/>
            <person name="Karanyi Z."/>
            <person name="Kato M."/>
            <person name="Keller N."/>
            <person name="Kelly D.E."/>
            <person name="Kiel J.A."/>
            <person name="Kim J.M."/>
            <person name="van der Klei I.J."/>
            <person name="Klis F.M."/>
            <person name="Kovalchuk A."/>
            <person name="Krasevec N."/>
            <person name="Kubicek C.P."/>
            <person name="Liu B."/>
            <person name="Maccabe A."/>
            <person name="Meyer V."/>
            <person name="Mirabito P."/>
            <person name="Miskei M."/>
            <person name="Mos M."/>
            <person name="Mullins J."/>
            <person name="Nelson D.R."/>
            <person name="Nielsen J."/>
            <person name="Oakley B.R."/>
            <person name="Osmani S.A."/>
            <person name="Pakula T."/>
            <person name="Paszewski A."/>
            <person name="Paulsen I."/>
            <person name="Pilsyk S."/>
            <person name="Pocsi I."/>
            <person name="Punt P.J."/>
            <person name="Ram A.F."/>
            <person name="Ren Q."/>
            <person name="Robellet X."/>
            <person name="Robson G."/>
            <person name="Seiboth B."/>
            <person name="van Solingen P."/>
            <person name="Specht T."/>
            <person name="Sun J."/>
            <person name="Taheri-Talesh N."/>
            <person name="Takeshita N."/>
            <person name="Ussery D."/>
            <person name="vanKuyk P.A."/>
            <person name="Visser H."/>
            <person name="van de Vondervoort P.J."/>
            <person name="de Vries R.P."/>
            <person name="Walton J."/>
            <person name="Xiang X."/>
            <person name="Xiong Y."/>
            <person name="Zeng A.P."/>
            <person name="Brandt B.W."/>
            <person name="Cornell M.J."/>
            <person name="van den Hondel C.A."/>
            <person name="Visser J."/>
            <person name="Oliver S.G."/>
            <person name="Turner G."/>
        </authorList>
    </citation>
    <scope>GENOME REANNOTATION</scope>
    <source>
        <strain>FGSC A4 / ATCC 38163 / CBS 112.46 / NRRL 194 / M139</strain>
    </source>
</reference>
<keyword id="KW-0119">Carbohydrate metabolism</keyword>
<keyword id="KW-0961">Cell wall biogenesis/degradation</keyword>
<keyword id="KW-0325">Glycoprotein</keyword>
<keyword id="KW-0326">Glycosidase</keyword>
<keyword id="KW-0378">Hydrolase</keyword>
<keyword id="KW-0624">Polysaccharide degradation</keyword>
<keyword id="KW-1185">Reference proteome</keyword>
<keyword id="KW-0964">Secreted</keyword>
<keyword id="KW-0732">Signal</keyword>
<accession>Q5B6Q3</accession>
<accession>C8V716</accession>
<accession>Q1HFT3</accession>
<dbReference type="EC" id="3.2.1.75"/>
<dbReference type="EMBL" id="DQ490491">
    <property type="protein sequence ID" value="ABF50867.1"/>
    <property type="molecule type" value="mRNA"/>
</dbReference>
<dbReference type="EMBL" id="AACD01000061">
    <property type="protein sequence ID" value="EAA59985.1"/>
    <property type="molecule type" value="Genomic_DNA"/>
</dbReference>
<dbReference type="EMBL" id="BN001302">
    <property type="protein sequence ID" value="CBF75405.1"/>
    <property type="molecule type" value="Genomic_DNA"/>
</dbReference>
<dbReference type="RefSeq" id="XP_661381.1">
    <property type="nucleotide sequence ID" value="XM_656289.1"/>
</dbReference>
<dbReference type="SMR" id="Q5B6Q3"/>
<dbReference type="CAZy" id="GH5">
    <property type="family name" value="Glycoside Hydrolase Family 5"/>
</dbReference>
<dbReference type="GlyCosmos" id="Q5B6Q3">
    <property type="glycosylation" value="1 site, No reported glycans"/>
</dbReference>
<dbReference type="EnsemblFungi" id="CBF75405">
    <property type="protein sequence ID" value="CBF75405"/>
    <property type="gene ID" value="ANIA_03777"/>
</dbReference>
<dbReference type="KEGG" id="ani:ANIA_03777"/>
<dbReference type="VEuPathDB" id="FungiDB:AN3777"/>
<dbReference type="eggNOG" id="ENOG502RBRB">
    <property type="taxonomic scope" value="Eukaryota"/>
</dbReference>
<dbReference type="HOGENOM" id="CLU_004624_7_0_1"/>
<dbReference type="InParanoid" id="Q5B6Q3"/>
<dbReference type="OMA" id="WMLPAEW"/>
<dbReference type="OrthoDB" id="1887033at2759"/>
<dbReference type="Proteomes" id="UP000000560">
    <property type="component" value="Chromosome II"/>
</dbReference>
<dbReference type="GO" id="GO:0005576">
    <property type="term" value="C:extracellular region"/>
    <property type="evidence" value="ECO:0000318"/>
    <property type="project" value="GO_Central"/>
</dbReference>
<dbReference type="GO" id="GO:0046557">
    <property type="term" value="F:glucan endo-1,6-beta-glucosidase activity"/>
    <property type="evidence" value="ECO:0000314"/>
    <property type="project" value="AspGD"/>
</dbReference>
<dbReference type="GO" id="GO:0004338">
    <property type="term" value="F:glucan exo-1,3-beta-glucosidase activity"/>
    <property type="evidence" value="ECO:0000318"/>
    <property type="project" value="GO_Central"/>
</dbReference>
<dbReference type="GO" id="GO:0071555">
    <property type="term" value="P:cell wall organization"/>
    <property type="evidence" value="ECO:0007669"/>
    <property type="project" value="UniProtKB-KW"/>
</dbReference>
<dbReference type="GO" id="GO:0009251">
    <property type="term" value="P:glucan catabolic process"/>
    <property type="evidence" value="ECO:0000314"/>
    <property type="project" value="AspGD"/>
</dbReference>
<dbReference type="FunFam" id="3.20.20.80:FF:000269">
    <property type="entry name" value="Probable glucan endo-1,6-beta-glucosidase B"/>
    <property type="match status" value="1"/>
</dbReference>
<dbReference type="Gene3D" id="3.20.20.80">
    <property type="entry name" value="Glycosidases"/>
    <property type="match status" value="1"/>
</dbReference>
<dbReference type="InterPro" id="IPR001547">
    <property type="entry name" value="Glyco_hydro_5"/>
</dbReference>
<dbReference type="InterPro" id="IPR017853">
    <property type="entry name" value="Glycoside_hydrolase_SF"/>
</dbReference>
<dbReference type="InterPro" id="IPR050386">
    <property type="entry name" value="Glycosyl_hydrolase_5"/>
</dbReference>
<dbReference type="PANTHER" id="PTHR31297">
    <property type="entry name" value="GLUCAN ENDO-1,6-BETA-GLUCOSIDASE B"/>
    <property type="match status" value="1"/>
</dbReference>
<dbReference type="PANTHER" id="PTHR31297:SF39">
    <property type="entry name" value="GLUCAN ENDO-1,6-BETA-GLUCOSIDASE B"/>
    <property type="match status" value="1"/>
</dbReference>
<dbReference type="Pfam" id="PF00150">
    <property type="entry name" value="Cellulase"/>
    <property type="match status" value="1"/>
</dbReference>
<dbReference type="SUPFAM" id="SSF51445">
    <property type="entry name" value="(Trans)glycosidases"/>
    <property type="match status" value="1"/>
</dbReference>
<evidence type="ECO:0000250" key="1"/>
<evidence type="ECO:0000255" key="2"/>
<evidence type="ECO:0000269" key="3">
    <source>
    </source>
</evidence>
<evidence type="ECO:0000305" key="4"/>
<protein>
    <recommendedName>
        <fullName>Glucan endo-1,6-beta-glucosidase B</fullName>
        <ecNumber>3.2.1.75</ecNumber>
    </recommendedName>
    <alternativeName>
        <fullName>Beta-1,6-glucanase B</fullName>
    </alternativeName>
    <alternativeName>
        <fullName>Endo-1,6-beta-D-glucanase B</fullName>
    </alternativeName>
    <alternativeName>
        <fullName>Endo-1,6-beta-glucanase B</fullName>
    </alternativeName>
</protein>